<protein>
    <recommendedName>
        <fullName>Uncharacterized 7.1 kDa protein in tk-vs intergenic region</fullName>
    </recommendedName>
</protein>
<dbReference type="EMBL" id="X04567">
    <property type="protein sequence ID" value="CAA28232.1"/>
    <property type="molecule type" value="Genomic_DNA"/>
</dbReference>
<dbReference type="EMBL" id="AF158101">
    <property type="protein sequence ID" value="AAD42665.1"/>
    <property type="molecule type" value="Genomic_DNA"/>
</dbReference>
<dbReference type="RefSeq" id="NP_049721.1">
    <property type="nucleotide sequence ID" value="NC_000866.4"/>
</dbReference>
<dbReference type="SMR" id="P13307"/>
<dbReference type="GeneID" id="1258579"/>
<dbReference type="KEGG" id="vg:1258579"/>
<dbReference type="OrthoDB" id="26627at10239"/>
<dbReference type="Proteomes" id="UP000009087">
    <property type="component" value="Segment"/>
</dbReference>
<sequence length="61" mass="7134">MSLSKEQKDTLFSLIHEVMDKNSELEKVCNECGPFSANEYEELSKEFDNKEQELIDYINSL</sequence>
<organismHost>
    <name type="scientific">Escherichia coli</name>
    <dbReference type="NCBI Taxonomy" id="562"/>
</organismHost>
<reference key="1">
    <citation type="journal article" date="1986" name="Nucleic Acids Res.">
        <title>Nucleotide sequence and analysis of the 58.3 to 65.5-kb early region of bacteriophage T4.</title>
        <authorList>
            <person name="Valerie K."/>
            <person name="Stevens J."/>
            <person name="Lynch M."/>
            <person name="Henderson E.E."/>
            <person name="de Riel J.K."/>
        </authorList>
    </citation>
    <scope>NUCLEOTIDE SEQUENCE [GENOMIC DNA]</scope>
</reference>
<reference key="2">
    <citation type="journal article" date="2003" name="Microbiol. Mol. Biol. Rev.">
        <title>Bacteriophage T4 genome.</title>
        <authorList>
            <person name="Miller E.S."/>
            <person name="Kutter E."/>
            <person name="Mosig G."/>
            <person name="Arisaka F."/>
            <person name="Kunisawa T."/>
            <person name="Ruger W."/>
        </authorList>
    </citation>
    <scope>NUCLEOTIDE SEQUENCE [LARGE SCALE GENOMIC DNA]</scope>
</reference>
<proteinExistence type="predicted"/>
<name>Y06B_BPT4</name>
<gene>
    <name type="primary">y06B</name>
    <name type="synonym">59.9</name>
    <name type="synonym">tk.2</name>
</gene>
<feature type="chain" id="PRO_0000165134" description="Uncharacterized 7.1 kDa protein in tk-vs intergenic region">
    <location>
        <begin position="1"/>
        <end position="61"/>
    </location>
</feature>
<keyword id="KW-1185">Reference proteome</keyword>
<accession>P13307</accession>
<organism>
    <name type="scientific">Enterobacteria phage T4</name>
    <name type="common">Bacteriophage T4</name>
    <dbReference type="NCBI Taxonomy" id="10665"/>
    <lineage>
        <taxon>Viruses</taxon>
        <taxon>Duplodnaviria</taxon>
        <taxon>Heunggongvirae</taxon>
        <taxon>Uroviricota</taxon>
        <taxon>Caudoviricetes</taxon>
        <taxon>Straboviridae</taxon>
        <taxon>Tevenvirinae</taxon>
        <taxon>Tequatrovirus</taxon>
    </lineage>
</organism>